<accession>Q0IIZ2</accession>
<keyword id="KW-0067">ATP-binding</keyword>
<keyword id="KW-0963">Cytoplasm</keyword>
<keyword id="KW-0256">Endoplasmic reticulum</keyword>
<keyword id="KW-0378">Hydrolase</keyword>
<keyword id="KW-0479">Metal-binding</keyword>
<keyword id="KW-0547">Nucleotide-binding</keyword>
<keyword id="KW-0539">Nucleus</keyword>
<keyword id="KW-1185">Reference proteome</keyword>
<keyword id="KW-0813">Transport</keyword>
<keyword id="KW-0862">Zinc</keyword>
<name>GET3_XENTR</name>
<evidence type="ECO:0000250" key="1">
    <source>
        <dbReference type="UniProtKB" id="O43681"/>
    </source>
</evidence>
<evidence type="ECO:0000250" key="2">
    <source>
        <dbReference type="UniProtKB" id="Q6IQE5"/>
    </source>
</evidence>
<evidence type="ECO:0000255" key="3">
    <source>
        <dbReference type="HAMAP-Rule" id="MF_03112"/>
    </source>
</evidence>
<comment type="function">
    <text evidence="3">ATPase required for the post-translational delivery of tail-anchored (TA) proteins to the endoplasmic reticulum. Recognizes and selectively binds the transmembrane domain of TA proteins in the cytosol. This complex then targets to the endoplasmic reticulum by membrane-bound receptors GET1/WRB and CAMLG/GET2, where the tail-anchored protein is released for insertion. This process is regulated by ATP binding and hydrolysis. ATP binding drives the homodimer towards the closed dimer state, facilitating recognition of newly synthesized TA membrane proteins. ATP hydrolysis is required for insertion. Subsequently, the homodimer reverts towards the open dimer state, lowering its affinity for the GET1-CAMLG receptor, and returning it to the cytosol to initiate a new round of targeting.</text>
</comment>
<comment type="catalytic activity">
    <reaction evidence="1">
        <text>ATP + H2O = ADP + phosphate + H(+)</text>
        <dbReference type="Rhea" id="RHEA:13065"/>
        <dbReference type="ChEBI" id="CHEBI:15377"/>
        <dbReference type="ChEBI" id="CHEBI:15378"/>
        <dbReference type="ChEBI" id="CHEBI:30616"/>
        <dbReference type="ChEBI" id="CHEBI:43474"/>
        <dbReference type="ChEBI" id="CHEBI:456216"/>
    </reaction>
</comment>
<comment type="subunit">
    <text evidence="3">Homodimer. Component of the Golgi to ER traffic (GET) complex, which is composed of GET1/WRB, CAMLG/GET2 and GET3/TRC40. Within the complex, CAMLG and GET1 form a heterotetramer which is stabilized by phosphatidylinositol binding and which binds to the GET3 homodimer.</text>
</comment>
<comment type="subcellular location">
    <subcellularLocation>
        <location evidence="1 3">Cytoplasm</location>
    </subcellularLocation>
    <subcellularLocation>
        <location evidence="1 3">Endoplasmic reticulum</location>
    </subcellularLocation>
    <subcellularLocation>
        <location evidence="1 3">Nucleus</location>
        <location evidence="1 3">Nucleolus</location>
    </subcellularLocation>
</comment>
<comment type="similarity">
    <text evidence="3">Belongs to the arsA ATPase family.</text>
</comment>
<organism>
    <name type="scientific">Xenopus tropicalis</name>
    <name type="common">Western clawed frog</name>
    <name type="synonym">Silurana tropicalis</name>
    <dbReference type="NCBI Taxonomy" id="8364"/>
    <lineage>
        <taxon>Eukaryota</taxon>
        <taxon>Metazoa</taxon>
        <taxon>Chordata</taxon>
        <taxon>Craniata</taxon>
        <taxon>Vertebrata</taxon>
        <taxon>Euteleostomi</taxon>
        <taxon>Amphibia</taxon>
        <taxon>Batrachia</taxon>
        <taxon>Anura</taxon>
        <taxon>Pipoidea</taxon>
        <taxon>Pipidae</taxon>
        <taxon>Xenopodinae</taxon>
        <taxon>Xenopus</taxon>
        <taxon>Silurana</taxon>
    </lineage>
</organism>
<feature type="chain" id="PRO_0000348232" description="ATPase GET3">
    <location>
        <begin position="1"/>
        <end position="342"/>
    </location>
</feature>
<feature type="active site" evidence="3">
    <location>
        <position position="68"/>
    </location>
</feature>
<feature type="binding site" evidence="2 3">
    <location>
        <position position="39"/>
    </location>
    <ligand>
        <name>ATP</name>
        <dbReference type="ChEBI" id="CHEBI:30616"/>
        <note>ligand shared between dimeric partners</note>
    </ligand>
</feature>
<feature type="binding site" evidence="2 3">
    <location>
        <position position="40"/>
    </location>
    <ligand>
        <name>ATP</name>
        <dbReference type="ChEBI" id="CHEBI:30616"/>
        <note>ligand shared between dimeric partners</note>
    </ligand>
</feature>
<feature type="binding site" evidence="2 3">
    <location>
        <position position="43"/>
    </location>
    <ligand>
        <name>ATP</name>
        <dbReference type="ChEBI" id="CHEBI:30616"/>
        <note>ligand shared between dimeric partners</note>
    </ligand>
</feature>
<feature type="binding site" evidence="2 3">
    <location>
        <position position="44"/>
    </location>
    <ligand>
        <name>ATP</name>
        <dbReference type="ChEBI" id="CHEBI:30616"/>
        <note>ligand shared between dimeric partners</note>
    </ligand>
</feature>
<feature type="binding site" evidence="2 3">
    <location>
        <position position="45"/>
    </location>
    <ligand>
        <name>ATP</name>
        <dbReference type="ChEBI" id="CHEBI:30616"/>
        <note>ligand shared between dimeric partners</note>
    </ligand>
</feature>
<feature type="binding site" evidence="2 3">
    <location>
        <position position="46"/>
    </location>
    <ligand>
        <name>ATP</name>
        <dbReference type="ChEBI" id="CHEBI:30616"/>
        <note>ligand shared between dimeric partners</note>
    </ligand>
</feature>
<feature type="binding site" evidence="2 3">
    <location>
        <position position="245"/>
    </location>
    <ligand>
        <name>ATP</name>
        <dbReference type="ChEBI" id="CHEBI:30616"/>
        <note>ligand shared between dimeric partners</note>
    </ligand>
</feature>
<feature type="binding site" evidence="2 3">
    <location>
        <position position="272"/>
    </location>
    <ligand>
        <name>ATP</name>
        <dbReference type="ChEBI" id="CHEBI:30616"/>
        <note>ligand shared between dimeric partners</note>
    </ligand>
</feature>
<feature type="binding site" evidence="2 3">
    <location>
        <position position="283"/>
    </location>
    <ligand>
        <name>Zn(2+)</name>
        <dbReference type="ChEBI" id="CHEBI:29105"/>
        <note>ligand shared between dimeric partners</note>
    </ligand>
</feature>
<feature type="binding site" evidence="2 3">
    <location>
        <position position="286"/>
    </location>
    <ligand>
        <name>Zn(2+)</name>
        <dbReference type="ChEBI" id="CHEBI:29105"/>
        <note>ligand shared between dimeric partners</note>
    </ligand>
</feature>
<feature type="binding site" evidence="2">
    <location>
        <position position="313"/>
    </location>
    <ligand>
        <name>ATP</name>
        <dbReference type="ChEBI" id="CHEBI:30616"/>
        <note>ligand shared between dimeric partners</note>
    </ligand>
</feature>
<feature type="binding site" evidence="2">
    <location>
        <position position="315"/>
    </location>
    <ligand>
        <name>ATP</name>
        <dbReference type="ChEBI" id="CHEBI:30616"/>
        <note>ligand shared between dimeric partners</note>
    </ligand>
</feature>
<gene>
    <name evidence="3" type="primary">get3</name>
    <name evidence="3" type="synonym">asna1</name>
</gene>
<proteinExistence type="evidence at transcript level"/>
<sequence>MAAPADDEFEDAPDVEPLEPTLSNVIDQRSLRWIFVGGKGGVGKTTCSCSLAVQLSRVRESVLIISTDPAHNISDAFDQKFSKVPTKVRGYDNLFAMEIDPSLGVAELPDEIFEEDNMLSMGKKMMQEAMSAFPGIDEAMSYAEVMRLVKGMNFSVVVFDTAPTGHTLRLLNFPTIVERGLGRLMQIKNQISPFISQMCNMLGLGDMNADQLASKLEETLPVIRSVSEQFKDPEQTTFICVCIAEFLSLYETERLIQELAKCSIDTHNIIVNQLVFPEPEKPCRMCEARHKIQSKYLDQMEDLYEDFHIAKLPLLPHEVRGAENVNTFSKLLLEPYKPPSGK</sequence>
<dbReference type="EC" id="3.6.4.-" evidence="1"/>
<dbReference type="EMBL" id="BC121423">
    <property type="protein sequence ID" value="AAI21424.1"/>
    <property type="molecule type" value="mRNA"/>
</dbReference>
<dbReference type="RefSeq" id="NP_001072341.1">
    <property type="nucleotide sequence ID" value="NM_001078873.1"/>
</dbReference>
<dbReference type="SMR" id="Q0IIZ2"/>
<dbReference type="FunCoup" id="Q0IIZ2">
    <property type="interactions" value="2732"/>
</dbReference>
<dbReference type="STRING" id="8364.ENSXETP00000030852"/>
<dbReference type="PaxDb" id="8364-ENSXETP00000059838"/>
<dbReference type="DNASU" id="779794"/>
<dbReference type="GeneID" id="779794"/>
<dbReference type="KEGG" id="xtr:779794"/>
<dbReference type="AGR" id="Xenbase:XB-GENE-1013226"/>
<dbReference type="CTD" id="439"/>
<dbReference type="Xenbase" id="XB-GENE-1013226">
    <property type="gene designation" value="get3"/>
</dbReference>
<dbReference type="eggNOG" id="KOG2825">
    <property type="taxonomic scope" value="Eukaryota"/>
</dbReference>
<dbReference type="InParanoid" id="Q0IIZ2"/>
<dbReference type="OMA" id="MDAPYEF"/>
<dbReference type="OrthoDB" id="1770at2759"/>
<dbReference type="Proteomes" id="UP000008143">
    <property type="component" value="Chromosome 3"/>
</dbReference>
<dbReference type="GO" id="GO:0005783">
    <property type="term" value="C:endoplasmic reticulum"/>
    <property type="evidence" value="ECO:0007669"/>
    <property type="project" value="UniProtKB-SubCell"/>
</dbReference>
<dbReference type="GO" id="GO:0005730">
    <property type="term" value="C:nucleolus"/>
    <property type="evidence" value="ECO:0007669"/>
    <property type="project" value="UniProtKB-SubCell"/>
</dbReference>
<dbReference type="GO" id="GO:0005524">
    <property type="term" value="F:ATP binding"/>
    <property type="evidence" value="ECO:0007669"/>
    <property type="project" value="UniProtKB-UniRule"/>
</dbReference>
<dbReference type="GO" id="GO:0016887">
    <property type="term" value="F:ATP hydrolysis activity"/>
    <property type="evidence" value="ECO:0007669"/>
    <property type="project" value="InterPro"/>
</dbReference>
<dbReference type="GO" id="GO:0046872">
    <property type="term" value="F:metal ion binding"/>
    <property type="evidence" value="ECO:0007669"/>
    <property type="project" value="UniProtKB-KW"/>
</dbReference>
<dbReference type="GO" id="GO:0045048">
    <property type="term" value="P:protein insertion into ER membrane"/>
    <property type="evidence" value="ECO:0007669"/>
    <property type="project" value="UniProtKB-UniRule"/>
</dbReference>
<dbReference type="CDD" id="cd02035">
    <property type="entry name" value="ArsA"/>
    <property type="match status" value="1"/>
</dbReference>
<dbReference type="FunFam" id="3.40.50.300:FF:000235">
    <property type="entry name" value="ATPase ASNA1"/>
    <property type="match status" value="1"/>
</dbReference>
<dbReference type="Gene3D" id="3.40.50.300">
    <property type="entry name" value="P-loop containing nucleotide triphosphate hydrolases"/>
    <property type="match status" value="1"/>
</dbReference>
<dbReference type="HAMAP" id="MF_03112">
    <property type="entry name" value="Asna1_Get3"/>
    <property type="match status" value="1"/>
</dbReference>
<dbReference type="InterPro" id="IPR025723">
    <property type="entry name" value="Anion-transp_ATPase-like_dom"/>
</dbReference>
<dbReference type="InterPro" id="IPR016300">
    <property type="entry name" value="ATPase_ArsA/GET3"/>
</dbReference>
<dbReference type="InterPro" id="IPR027542">
    <property type="entry name" value="ATPase_ArsA/GET3_euk"/>
</dbReference>
<dbReference type="InterPro" id="IPR027417">
    <property type="entry name" value="P-loop_NTPase"/>
</dbReference>
<dbReference type="NCBIfam" id="TIGR00345">
    <property type="entry name" value="GET3_arsA_TRC40"/>
    <property type="match status" value="1"/>
</dbReference>
<dbReference type="PANTHER" id="PTHR10803">
    <property type="entry name" value="ARSENICAL PUMP-DRIVING ATPASE ARSENITE-TRANSLOCATING ATPASE"/>
    <property type="match status" value="1"/>
</dbReference>
<dbReference type="PANTHER" id="PTHR10803:SF3">
    <property type="entry name" value="ATPASE GET3"/>
    <property type="match status" value="1"/>
</dbReference>
<dbReference type="Pfam" id="PF02374">
    <property type="entry name" value="ArsA_ATPase"/>
    <property type="match status" value="1"/>
</dbReference>
<dbReference type="SUPFAM" id="SSF52540">
    <property type="entry name" value="P-loop containing nucleoside triphosphate hydrolases"/>
    <property type="match status" value="1"/>
</dbReference>
<reference key="1">
    <citation type="submission" date="2006-08" db="EMBL/GenBank/DDBJ databases">
        <authorList>
            <consortium name="NIH - Xenopus Gene Collection (XGC) project"/>
        </authorList>
    </citation>
    <scope>NUCLEOTIDE SEQUENCE [LARGE SCALE MRNA]</scope>
    <source>
        <tissue>Testis</tissue>
    </source>
</reference>
<protein>
    <recommendedName>
        <fullName evidence="3">ATPase GET3</fullName>
        <ecNumber evidence="1">3.6.4.-</ecNumber>
    </recommendedName>
    <alternativeName>
        <fullName evidence="3">Arsenical pump-driving ATPase</fullName>
    </alternativeName>
    <alternativeName>
        <fullName evidence="3">Arsenite-stimulated ATPase</fullName>
    </alternativeName>
    <alternativeName>
        <fullName evidence="3">Guided entry of tail-anchored proteins factor 3, ATPase</fullName>
    </alternativeName>
</protein>